<feature type="chain" id="PRO_0000109255" description="Probable 3-hydroxybutyryl-CoA dehydrogenase">
    <location>
        <begin position="1"/>
        <end position="287"/>
    </location>
</feature>
<feature type="site" description="Important for catalytic activity" evidence="1">
    <location>
        <position position="140"/>
    </location>
</feature>
<feature type="sequence conflict" description="In Ref. 2; BAA12588." evidence="3" ref="2">
    <original>AKP</original>
    <variation>RT</variation>
    <location>
        <begin position="209"/>
        <end position="211"/>
    </location>
</feature>
<comment type="catalytic activity">
    <reaction>
        <text>(3S)-3-hydroxybutanoyl-CoA + NADP(+) = acetoacetyl-CoA + NADPH + H(+)</text>
        <dbReference type="Rhea" id="RHEA:16197"/>
        <dbReference type="ChEBI" id="CHEBI:15378"/>
        <dbReference type="ChEBI" id="CHEBI:57286"/>
        <dbReference type="ChEBI" id="CHEBI:57316"/>
        <dbReference type="ChEBI" id="CHEBI:57783"/>
        <dbReference type="ChEBI" id="CHEBI:58349"/>
        <dbReference type="EC" id="1.1.1.157"/>
    </reaction>
</comment>
<comment type="pathway">
    <text>Lipid metabolism; butanoate metabolism.</text>
</comment>
<comment type="developmental stage">
    <text evidence="2">Expressed in the mother cell at intermediate stages of sporulation under the control of the sigma-E factor.</text>
</comment>
<comment type="induction">
    <text evidence="2">Subject to catabolite repression.</text>
</comment>
<comment type="similarity">
    <text evidence="3">Belongs to the 3-hydroxyacyl-CoA dehydrogenase family.</text>
</comment>
<comment type="sequence caution" evidence="3">
    <conflict type="erroneous initiation">
        <sequence resource="EMBL-CDS" id="BAA12588"/>
    </conflict>
</comment>
<proteinExistence type="evidence at transcript level"/>
<name>HBD_BACSU</name>
<gene>
    <name type="primary">mmgB</name>
    <name type="synonym">yqiM</name>
    <name type="ordered locus">BSU24160</name>
</gene>
<dbReference type="EC" id="1.1.1.157"/>
<dbReference type="EMBL" id="U29084">
    <property type="protein sequence ID" value="AAB09614.1"/>
    <property type="molecule type" value="Genomic_DNA"/>
</dbReference>
<dbReference type="EMBL" id="D84432">
    <property type="protein sequence ID" value="BAA12588.1"/>
    <property type="status" value="ALT_INIT"/>
    <property type="molecule type" value="Genomic_DNA"/>
</dbReference>
<dbReference type="EMBL" id="AL009126">
    <property type="protein sequence ID" value="CAB14347.2"/>
    <property type="molecule type" value="Genomic_DNA"/>
</dbReference>
<dbReference type="PIR" id="C69658">
    <property type="entry name" value="C69658"/>
</dbReference>
<dbReference type="RefSeq" id="NP_390296.2">
    <property type="nucleotide sequence ID" value="NC_000964.3"/>
</dbReference>
<dbReference type="RefSeq" id="WP_003230294.1">
    <property type="nucleotide sequence ID" value="NZ_OZ025638.1"/>
</dbReference>
<dbReference type="SMR" id="P45856"/>
<dbReference type="FunCoup" id="P45856">
    <property type="interactions" value="394"/>
</dbReference>
<dbReference type="STRING" id="224308.BSU24160"/>
<dbReference type="PaxDb" id="224308-BSU24160"/>
<dbReference type="EnsemblBacteria" id="CAB14347">
    <property type="protein sequence ID" value="CAB14347"/>
    <property type="gene ID" value="BSU_24160"/>
</dbReference>
<dbReference type="GeneID" id="938660"/>
<dbReference type="KEGG" id="bsu:BSU24160"/>
<dbReference type="PATRIC" id="fig|224308.179.peg.2630"/>
<dbReference type="eggNOG" id="COG1250">
    <property type="taxonomic scope" value="Bacteria"/>
</dbReference>
<dbReference type="InParanoid" id="P45856"/>
<dbReference type="OrthoDB" id="9771883at2"/>
<dbReference type="PhylomeDB" id="P45856"/>
<dbReference type="BioCyc" id="BSUB:BSU24160-MONOMER"/>
<dbReference type="UniPathway" id="UPA00863"/>
<dbReference type="Proteomes" id="UP000001570">
    <property type="component" value="Chromosome"/>
</dbReference>
<dbReference type="GO" id="GO:0008691">
    <property type="term" value="F:3-hydroxybutyryl-CoA dehydrogenase activity"/>
    <property type="evidence" value="ECO:0007669"/>
    <property type="project" value="UniProtKB-EC"/>
</dbReference>
<dbReference type="GO" id="GO:0070403">
    <property type="term" value="F:NAD+ binding"/>
    <property type="evidence" value="ECO:0007669"/>
    <property type="project" value="InterPro"/>
</dbReference>
<dbReference type="GO" id="GO:0016491">
    <property type="term" value="F:oxidoreductase activity"/>
    <property type="evidence" value="ECO:0000318"/>
    <property type="project" value="GO_Central"/>
</dbReference>
<dbReference type="GO" id="GO:0019605">
    <property type="term" value="P:butyrate metabolic process"/>
    <property type="evidence" value="ECO:0007669"/>
    <property type="project" value="UniProtKB-UniPathway"/>
</dbReference>
<dbReference type="GO" id="GO:0009056">
    <property type="term" value="P:catabolic process"/>
    <property type="evidence" value="ECO:0007669"/>
    <property type="project" value="UniProtKB-ARBA"/>
</dbReference>
<dbReference type="GO" id="GO:0030435">
    <property type="term" value="P:sporulation resulting in formation of a cellular spore"/>
    <property type="evidence" value="ECO:0007669"/>
    <property type="project" value="UniProtKB-KW"/>
</dbReference>
<dbReference type="FunFam" id="3.40.50.720:FF:000009">
    <property type="entry name" value="Fatty oxidation complex, alpha subunit"/>
    <property type="match status" value="1"/>
</dbReference>
<dbReference type="Gene3D" id="1.10.1040.10">
    <property type="entry name" value="N-(1-d-carboxylethyl)-l-norvaline Dehydrogenase, domain 2"/>
    <property type="match status" value="1"/>
</dbReference>
<dbReference type="Gene3D" id="3.40.50.720">
    <property type="entry name" value="NAD(P)-binding Rossmann-like Domain"/>
    <property type="match status" value="1"/>
</dbReference>
<dbReference type="InterPro" id="IPR022694">
    <property type="entry name" value="3-OHacyl-CoA_DH"/>
</dbReference>
<dbReference type="InterPro" id="IPR006180">
    <property type="entry name" value="3-OHacyl-CoA_DH_CS"/>
</dbReference>
<dbReference type="InterPro" id="IPR006176">
    <property type="entry name" value="3-OHacyl-CoA_DH_NAD-bd"/>
</dbReference>
<dbReference type="InterPro" id="IPR006108">
    <property type="entry name" value="3HC_DH_C"/>
</dbReference>
<dbReference type="InterPro" id="IPR008927">
    <property type="entry name" value="6-PGluconate_DH-like_C_sf"/>
</dbReference>
<dbReference type="InterPro" id="IPR013328">
    <property type="entry name" value="6PGD_dom2"/>
</dbReference>
<dbReference type="InterPro" id="IPR036291">
    <property type="entry name" value="NAD(P)-bd_dom_sf"/>
</dbReference>
<dbReference type="NCBIfam" id="NF004474">
    <property type="entry name" value="PRK05808.1"/>
    <property type="match status" value="1"/>
</dbReference>
<dbReference type="PANTHER" id="PTHR48075">
    <property type="entry name" value="3-HYDROXYACYL-COA DEHYDROGENASE FAMILY PROTEIN"/>
    <property type="match status" value="1"/>
</dbReference>
<dbReference type="PANTHER" id="PTHR48075:SF5">
    <property type="entry name" value="3-HYDROXYBUTYRYL-COA DEHYDROGENASE"/>
    <property type="match status" value="1"/>
</dbReference>
<dbReference type="Pfam" id="PF00725">
    <property type="entry name" value="3HCDH"/>
    <property type="match status" value="1"/>
</dbReference>
<dbReference type="Pfam" id="PF02737">
    <property type="entry name" value="3HCDH_N"/>
    <property type="match status" value="1"/>
</dbReference>
<dbReference type="PIRSF" id="PIRSF000105">
    <property type="entry name" value="HCDH"/>
    <property type="match status" value="1"/>
</dbReference>
<dbReference type="SUPFAM" id="SSF48179">
    <property type="entry name" value="6-phosphogluconate dehydrogenase C-terminal domain-like"/>
    <property type="match status" value="1"/>
</dbReference>
<dbReference type="SUPFAM" id="SSF51735">
    <property type="entry name" value="NAD(P)-binding Rossmann-fold domains"/>
    <property type="match status" value="1"/>
</dbReference>
<dbReference type="PROSITE" id="PS00067">
    <property type="entry name" value="3HCDH"/>
    <property type="match status" value="1"/>
</dbReference>
<keyword id="KW-0276">Fatty acid metabolism</keyword>
<keyword id="KW-0443">Lipid metabolism</keyword>
<keyword id="KW-0521">NADP</keyword>
<keyword id="KW-0560">Oxidoreductase</keyword>
<keyword id="KW-1185">Reference proteome</keyword>
<keyword id="KW-0749">Sporulation</keyword>
<reference key="1">
    <citation type="journal article" date="1996" name="J. Bacteriol.">
        <title>A sigma E dependent operon subject to catabolite repression during sporulation in Bacillus subtilis.</title>
        <authorList>
            <person name="Bryan E.M."/>
            <person name="Beall B.W."/>
            <person name="Moran C.P. Jr."/>
        </authorList>
    </citation>
    <scope>NUCLEOTIDE SEQUENCE [GENOMIC DNA]</scope>
    <scope>DEVELOPMENTAL STAGE</scope>
    <scope>INDUCTION</scope>
    <source>
        <strain>168 / MB24</strain>
    </source>
</reference>
<reference key="2">
    <citation type="journal article" date="1996" name="Microbiology">
        <title>Systematic sequencing of the 283 kb 210 degrees-232 degrees region of the Bacillus subtilis genome containing the skin element and many sporulation genes.</title>
        <authorList>
            <person name="Mizuno M."/>
            <person name="Masuda S."/>
            <person name="Takemaru K."/>
            <person name="Hosono S."/>
            <person name="Sato T."/>
            <person name="Takeuchi M."/>
            <person name="Kobayashi Y."/>
        </authorList>
    </citation>
    <scope>NUCLEOTIDE SEQUENCE [GENOMIC DNA]</scope>
    <source>
        <strain>168 / JH642</strain>
    </source>
</reference>
<reference key="3">
    <citation type="journal article" date="1997" name="Nature">
        <title>The complete genome sequence of the Gram-positive bacterium Bacillus subtilis.</title>
        <authorList>
            <person name="Kunst F."/>
            <person name="Ogasawara N."/>
            <person name="Moszer I."/>
            <person name="Albertini A.M."/>
            <person name="Alloni G."/>
            <person name="Azevedo V."/>
            <person name="Bertero M.G."/>
            <person name="Bessieres P."/>
            <person name="Bolotin A."/>
            <person name="Borchert S."/>
            <person name="Borriss R."/>
            <person name="Boursier L."/>
            <person name="Brans A."/>
            <person name="Braun M."/>
            <person name="Brignell S.C."/>
            <person name="Bron S."/>
            <person name="Brouillet S."/>
            <person name="Bruschi C.V."/>
            <person name="Caldwell B."/>
            <person name="Capuano V."/>
            <person name="Carter N.M."/>
            <person name="Choi S.-K."/>
            <person name="Codani J.-J."/>
            <person name="Connerton I.F."/>
            <person name="Cummings N.J."/>
            <person name="Daniel R.A."/>
            <person name="Denizot F."/>
            <person name="Devine K.M."/>
            <person name="Duesterhoeft A."/>
            <person name="Ehrlich S.D."/>
            <person name="Emmerson P.T."/>
            <person name="Entian K.-D."/>
            <person name="Errington J."/>
            <person name="Fabret C."/>
            <person name="Ferrari E."/>
            <person name="Foulger D."/>
            <person name="Fritz C."/>
            <person name="Fujita M."/>
            <person name="Fujita Y."/>
            <person name="Fuma S."/>
            <person name="Galizzi A."/>
            <person name="Galleron N."/>
            <person name="Ghim S.-Y."/>
            <person name="Glaser P."/>
            <person name="Goffeau A."/>
            <person name="Golightly E.J."/>
            <person name="Grandi G."/>
            <person name="Guiseppi G."/>
            <person name="Guy B.J."/>
            <person name="Haga K."/>
            <person name="Haiech J."/>
            <person name="Harwood C.R."/>
            <person name="Henaut A."/>
            <person name="Hilbert H."/>
            <person name="Holsappel S."/>
            <person name="Hosono S."/>
            <person name="Hullo M.-F."/>
            <person name="Itaya M."/>
            <person name="Jones L.-M."/>
            <person name="Joris B."/>
            <person name="Karamata D."/>
            <person name="Kasahara Y."/>
            <person name="Klaerr-Blanchard M."/>
            <person name="Klein C."/>
            <person name="Kobayashi Y."/>
            <person name="Koetter P."/>
            <person name="Koningstein G."/>
            <person name="Krogh S."/>
            <person name="Kumano M."/>
            <person name="Kurita K."/>
            <person name="Lapidus A."/>
            <person name="Lardinois S."/>
            <person name="Lauber J."/>
            <person name="Lazarevic V."/>
            <person name="Lee S.-M."/>
            <person name="Levine A."/>
            <person name="Liu H."/>
            <person name="Masuda S."/>
            <person name="Mauel C."/>
            <person name="Medigue C."/>
            <person name="Medina N."/>
            <person name="Mellado R.P."/>
            <person name="Mizuno M."/>
            <person name="Moestl D."/>
            <person name="Nakai S."/>
            <person name="Noback M."/>
            <person name="Noone D."/>
            <person name="O'Reilly M."/>
            <person name="Ogawa K."/>
            <person name="Ogiwara A."/>
            <person name="Oudega B."/>
            <person name="Park S.-H."/>
            <person name="Parro V."/>
            <person name="Pohl T.M."/>
            <person name="Portetelle D."/>
            <person name="Porwollik S."/>
            <person name="Prescott A.M."/>
            <person name="Presecan E."/>
            <person name="Pujic P."/>
            <person name="Purnelle B."/>
            <person name="Rapoport G."/>
            <person name="Rey M."/>
            <person name="Reynolds S."/>
            <person name="Rieger M."/>
            <person name="Rivolta C."/>
            <person name="Rocha E."/>
            <person name="Roche B."/>
            <person name="Rose M."/>
            <person name="Sadaie Y."/>
            <person name="Sato T."/>
            <person name="Scanlan E."/>
            <person name="Schleich S."/>
            <person name="Schroeter R."/>
            <person name="Scoffone F."/>
            <person name="Sekiguchi J."/>
            <person name="Sekowska A."/>
            <person name="Seror S.J."/>
            <person name="Serror P."/>
            <person name="Shin B.-S."/>
            <person name="Soldo B."/>
            <person name="Sorokin A."/>
            <person name="Tacconi E."/>
            <person name="Takagi T."/>
            <person name="Takahashi H."/>
            <person name="Takemaru K."/>
            <person name="Takeuchi M."/>
            <person name="Tamakoshi A."/>
            <person name="Tanaka T."/>
            <person name="Terpstra P."/>
            <person name="Tognoni A."/>
            <person name="Tosato V."/>
            <person name="Uchiyama S."/>
            <person name="Vandenbol M."/>
            <person name="Vannier F."/>
            <person name="Vassarotti A."/>
            <person name="Viari A."/>
            <person name="Wambutt R."/>
            <person name="Wedler E."/>
            <person name="Wedler H."/>
            <person name="Weitzenegger T."/>
            <person name="Winters P."/>
            <person name="Wipat A."/>
            <person name="Yamamoto H."/>
            <person name="Yamane K."/>
            <person name="Yasumoto K."/>
            <person name="Yata K."/>
            <person name="Yoshida K."/>
            <person name="Yoshikawa H.-F."/>
            <person name="Zumstein E."/>
            <person name="Yoshikawa H."/>
            <person name="Danchin A."/>
        </authorList>
    </citation>
    <scope>NUCLEOTIDE SEQUENCE [LARGE SCALE GENOMIC DNA]</scope>
    <source>
        <strain>168</strain>
    </source>
</reference>
<reference key="4">
    <citation type="journal article" date="2009" name="Microbiology">
        <title>From a consortium sequence to a unified sequence: the Bacillus subtilis 168 reference genome a decade later.</title>
        <authorList>
            <person name="Barbe V."/>
            <person name="Cruveiller S."/>
            <person name="Kunst F."/>
            <person name="Lenoble P."/>
            <person name="Meurice G."/>
            <person name="Sekowska A."/>
            <person name="Vallenet D."/>
            <person name="Wang T."/>
            <person name="Moszer I."/>
            <person name="Medigue C."/>
            <person name="Danchin A."/>
        </authorList>
    </citation>
    <scope>SEQUENCE REVISION</scope>
</reference>
<evidence type="ECO:0000250" key="1"/>
<evidence type="ECO:0000269" key="2">
    <source>
    </source>
</evidence>
<evidence type="ECO:0000305" key="3"/>
<organism>
    <name type="scientific">Bacillus subtilis (strain 168)</name>
    <dbReference type="NCBI Taxonomy" id="224308"/>
    <lineage>
        <taxon>Bacteria</taxon>
        <taxon>Bacillati</taxon>
        <taxon>Bacillota</taxon>
        <taxon>Bacilli</taxon>
        <taxon>Bacillales</taxon>
        <taxon>Bacillaceae</taxon>
        <taxon>Bacillus</taxon>
    </lineage>
</organism>
<protein>
    <recommendedName>
        <fullName>Probable 3-hydroxybutyryl-CoA dehydrogenase</fullName>
        <ecNumber>1.1.1.157</ecNumber>
    </recommendedName>
    <alternativeName>
        <fullName>Beta-hydroxybutyryl-CoA dehydrogenase</fullName>
        <shortName>BHBD</shortName>
    </alternativeName>
</protein>
<accession>P45856</accession>
<accession>O32016</accession>
<sequence length="287" mass="31394">MEIKQIMVAGAGQMGSGIAQTAADAGFYVRMYDVNPEAAEAGLKRLKKQLARDAEKGKRTETEVKSVINRISISQTLEEAEHADIVIEAIAENMAAKTEMFKTLDRICPPHTILASNTSSLPITEIAAVTNRPQRVIGMHFMNPVPVMKLVEVIRGLATSEETALDVMALAEKMGKTAVEVNDFPGFVSNRVLLPMINEAIYCVYEGVAKPEAIDEVMKLGMNHPMGPLALADFIGLDTCLSIMEVLHSGLGDSKYRPCPLLRKYVKAGWLGKKSGRGFYDYEEKTS</sequence>